<dbReference type="EMBL" id="AL079344">
    <property type="protein sequence ID" value="CAB45333.1"/>
    <property type="status" value="ALT_SEQ"/>
    <property type="molecule type" value="Genomic_DNA"/>
</dbReference>
<dbReference type="EMBL" id="AL161575">
    <property type="protein sequence ID" value="CAB79731.1"/>
    <property type="status" value="ALT_SEQ"/>
    <property type="molecule type" value="Genomic_DNA"/>
</dbReference>
<dbReference type="EMBL" id="CP002687">
    <property type="protein sequence ID" value="AEE85666.1"/>
    <property type="molecule type" value="Genomic_DNA"/>
</dbReference>
<dbReference type="EMBL" id="BT010610">
    <property type="protein sequence ID" value="AAQ89632.1"/>
    <property type="molecule type" value="mRNA"/>
</dbReference>
<dbReference type="EMBL" id="AK176425">
    <property type="protein sequence ID" value="BAD44188.1"/>
    <property type="molecule type" value="mRNA"/>
</dbReference>
<dbReference type="PIR" id="T09936">
    <property type="entry name" value="T09936"/>
</dbReference>
<dbReference type="RefSeq" id="NP_194702.2">
    <property type="nucleotide sequence ID" value="NM_119118.3"/>
</dbReference>
<dbReference type="SMR" id="Q9SU78"/>
<dbReference type="BioGRID" id="14381">
    <property type="interactions" value="12"/>
</dbReference>
<dbReference type="FunCoup" id="Q9SU78">
    <property type="interactions" value="210"/>
</dbReference>
<dbReference type="STRING" id="3702.Q9SU78"/>
<dbReference type="iPTMnet" id="Q9SU78"/>
<dbReference type="PaxDb" id="3702-AT4G29730.1"/>
<dbReference type="ProteomicsDB" id="250786"/>
<dbReference type="EnsemblPlants" id="AT4G29730.1">
    <property type="protein sequence ID" value="AT4G29730.1"/>
    <property type="gene ID" value="AT4G29730"/>
</dbReference>
<dbReference type="GeneID" id="829094"/>
<dbReference type="Gramene" id="AT4G29730.1">
    <property type="protein sequence ID" value="AT4G29730.1"/>
    <property type="gene ID" value="AT4G29730"/>
</dbReference>
<dbReference type="KEGG" id="ath:AT4G29730"/>
<dbReference type="Araport" id="AT4G29730"/>
<dbReference type="TAIR" id="AT4G29730">
    <property type="gene designation" value="NFC5"/>
</dbReference>
<dbReference type="eggNOG" id="KOG0264">
    <property type="taxonomic scope" value="Eukaryota"/>
</dbReference>
<dbReference type="HOGENOM" id="CLU_020445_2_0_1"/>
<dbReference type="InParanoid" id="Q9SU78"/>
<dbReference type="OMA" id="HQPRSTE"/>
<dbReference type="PhylomeDB" id="Q9SU78"/>
<dbReference type="CD-CODE" id="4299E36E">
    <property type="entry name" value="Nucleolus"/>
</dbReference>
<dbReference type="PRO" id="PR:Q9SU78"/>
<dbReference type="Proteomes" id="UP000006548">
    <property type="component" value="Chromosome 4"/>
</dbReference>
<dbReference type="ExpressionAtlas" id="Q9SU78">
    <property type="expression patterns" value="baseline and differential"/>
</dbReference>
<dbReference type="GO" id="GO:0080008">
    <property type="term" value="C:Cul4-RING E3 ubiquitin ligase complex"/>
    <property type="evidence" value="ECO:0000250"/>
    <property type="project" value="TAIR"/>
</dbReference>
<dbReference type="GO" id="GO:0035098">
    <property type="term" value="C:ESC/E(Z) complex"/>
    <property type="evidence" value="ECO:0000314"/>
    <property type="project" value="UniProtKB"/>
</dbReference>
<dbReference type="GO" id="GO:0040029">
    <property type="term" value="P:epigenetic regulation of gene expression"/>
    <property type="evidence" value="ECO:0000315"/>
    <property type="project" value="UniProtKB"/>
</dbReference>
<dbReference type="GO" id="GO:0010629">
    <property type="term" value="P:negative regulation of gene expression"/>
    <property type="evidence" value="ECO:0000315"/>
    <property type="project" value="CACAO"/>
</dbReference>
<dbReference type="GO" id="GO:0006355">
    <property type="term" value="P:regulation of DNA-templated transcription"/>
    <property type="evidence" value="ECO:0000315"/>
    <property type="project" value="UniProtKB"/>
</dbReference>
<dbReference type="FunFam" id="2.130.10.10:FF:000857">
    <property type="entry name" value="WD-40 repeat-containing protein MSI4"/>
    <property type="match status" value="1"/>
</dbReference>
<dbReference type="Gene3D" id="2.130.10.10">
    <property type="entry name" value="YVTN repeat-like/Quinoprotein amine dehydrogenase"/>
    <property type="match status" value="1"/>
</dbReference>
<dbReference type="InterPro" id="IPR022052">
    <property type="entry name" value="Histone-bd_RBBP4-like_N"/>
</dbReference>
<dbReference type="InterPro" id="IPR015943">
    <property type="entry name" value="WD40/YVTN_repeat-like_dom_sf"/>
</dbReference>
<dbReference type="InterPro" id="IPR019775">
    <property type="entry name" value="WD40_repeat_CS"/>
</dbReference>
<dbReference type="InterPro" id="IPR036322">
    <property type="entry name" value="WD40_repeat_dom_sf"/>
</dbReference>
<dbReference type="InterPro" id="IPR001680">
    <property type="entry name" value="WD40_rpt"/>
</dbReference>
<dbReference type="InterPro" id="IPR050459">
    <property type="entry name" value="WD_repeat_RBAP46/RBAP48/MSI1"/>
</dbReference>
<dbReference type="PANTHER" id="PTHR22850">
    <property type="entry name" value="WD40 REPEAT FAMILY"/>
    <property type="match status" value="1"/>
</dbReference>
<dbReference type="Pfam" id="PF12265">
    <property type="entry name" value="CAF1C_H4-bd"/>
    <property type="match status" value="1"/>
</dbReference>
<dbReference type="Pfam" id="PF00400">
    <property type="entry name" value="WD40"/>
    <property type="match status" value="4"/>
</dbReference>
<dbReference type="SMART" id="SM00320">
    <property type="entry name" value="WD40"/>
    <property type="match status" value="5"/>
</dbReference>
<dbReference type="SUPFAM" id="SSF50978">
    <property type="entry name" value="WD40 repeat-like"/>
    <property type="match status" value="1"/>
</dbReference>
<dbReference type="PROSITE" id="PS00678">
    <property type="entry name" value="WD_REPEATS_1"/>
    <property type="match status" value="1"/>
</dbReference>
<dbReference type="PROSITE" id="PS50082">
    <property type="entry name" value="WD_REPEATS_2"/>
    <property type="match status" value="3"/>
</dbReference>
<dbReference type="PROSITE" id="PS50294">
    <property type="entry name" value="WD_REPEATS_REGION"/>
    <property type="match status" value="1"/>
</dbReference>
<protein>
    <recommendedName>
        <fullName evidence="8">WD-40 repeat-containing protein MSI5</fullName>
    </recommendedName>
    <alternativeName>
        <fullName evidence="7">Protein MULTICOPY SUPPRESSOR OF IRA1 5</fullName>
        <shortName evidence="7">AtMSI5</shortName>
    </alternativeName>
</protein>
<reference key="1">
    <citation type="journal article" date="1999" name="Nature">
        <title>Sequence and analysis of chromosome 4 of the plant Arabidopsis thaliana.</title>
        <authorList>
            <person name="Mayer K.F.X."/>
            <person name="Schueller C."/>
            <person name="Wambutt R."/>
            <person name="Murphy G."/>
            <person name="Volckaert G."/>
            <person name="Pohl T."/>
            <person name="Duesterhoeft A."/>
            <person name="Stiekema W."/>
            <person name="Entian K.-D."/>
            <person name="Terryn N."/>
            <person name="Harris B."/>
            <person name="Ansorge W."/>
            <person name="Brandt P."/>
            <person name="Grivell L.A."/>
            <person name="Rieger M."/>
            <person name="Weichselgartner M."/>
            <person name="de Simone V."/>
            <person name="Obermaier B."/>
            <person name="Mache R."/>
            <person name="Mueller M."/>
            <person name="Kreis M."/>
            <person name="Delseny M."/>
            <person name="Puigdomenech P."/>
            <person name="Watson M."/>
            <person name="Schmidtheini T."/>
            <person name="Reichert B."/>
            <person name="Portetelle D."/>
            <person name="Perez-Alonso M."/>
            <person name="Boutry M."/>
            <person name="Bancroft I."/>
            <person name="Vos P."/>
            <person name="Hoheisel J."/>
            <person name="Zimmermann W."/>
            <person name="Wedler H."/>
            <person name="Ridley P."/>
            <person name="Langham S.-A."/>
            <person name="McCullagh B."/>
            <person name="Bilham L."/>
            <person name="Robben J."/>
            <person name="van der Schueren J."/>
            <person name="Grymonprez B."/>
            <person name="Chuang Y.-J."/>
            <person name="Vandenbussche F."/>
            <person name="Braeken M."/>
            <person name="Weltjens I."/>
            <person name="Voet M."/>
            <person name="Bastiaens I."/>
            <person name="Aert R."/>
            <person name="Defoor E."/>
            <person name="Weitzenegger T."/>
            <person name="Bothe G."/>
            <person name="Ramsperger U."/>
            <person name="Hilbert H."/>
            <person name="Braun M."/>
            <person name="Holzer E."/>
            <person name="Brandt A."/>
            <person name="Peters S."/>
            <person name="van Staveren M."/>
            <person name="Dirkse W."/>
            <person name="Mooijman P."/>
            <person name="Klein Lankhorst R."/>
            <person name="Rose M."/>
            <person name="Hauf J."/>
            <person name="Koetter P."/>
            <person name="Berneiser S."/>
            <person name="Hempel S."/>
            <person name="Feldpausch M."/>
            <person name="Lamberth S."/>
            <person name="Van den Daele H."/>
            <person name="De Keyser A."/>
            <person name="Buysshaert C."/>
            <person name="Gielen J."/>
            <person name="Villarroel R."/>
            <person name="De Clercq R."/>
            <person name="van Montagu M."/>
            <person name="Rogers J."/>
            <person name="Cronin A."/>
            <person name="Quail M.A."/>
            <person name="Bray-Allen S."/>
            <person name="Clark L."/>
            <person name="Doggett J."/>
            <person name="Hall S."/>
            <person name="Kay M."/>
            <person name="Lennard N."/>
            <person name="McLay K."/>
            <person name="Mayes R."/>
            <person name="Pettett A."/>
            <person name="Rajandream M.A."/>
            <person name="Lyne M."/>
            <person name="Benes V."/>
            <person name="Rechmann S."/>
            <person name="Borkova D."/>
            <person name="Bloecker H."/>
            <person name="Scharfe M."/>
            <person name="Grimm M."/>
            <person name="Loehnert T.-H."/>
            <person name="Dose S."/>
            <person name="de Haan M."/>
            <person name="Maarse A.C."/>
            <person name="Schaefer M."/>
            <person name="Mueller-Auer S."/>
            <person name="Gabel C."/>
            <person name="Fuchs M."/>
            <person name="Fartmann B."/>
            <person name="Granderath K."/>
            <person name="Dauner D."/>
            <person name="Herzl A."/>
            <person name="Neumann S."/>
            <person name="Argiriou A."/>
            <person name="Vitale D."/>
            <person name="Liguori R."/>
            <person name="Piravandi E."/>
            <person name="Massenet O."/>
            <person name="Quigley F."/>
            <person name="Clabauld G."/>
            <person name="Muendlein A."/>
            <person name="Felber R."/>
            <person name="Schnabl S."/>
            <person name="Hiller R."/>
            <person name="Schmidt W."/>
            <person name="Lecharny A."/>
            <person name="Aubourg S."/>
            <person name="Chefdor F."/>
            <person name="Cooke R."/>
            <person name="Berger C."/>
            <person name="Monfort A."/>
            <person name="Casacuberta E."/>
            <person name="Gibbons T."/>
            <person name="Weber N."/>
            <person name="Vandenbol M."/>
            <person name="Bargues M."/>
            <person name="Terol J."/>
            <person name="Torres A."/>
            <person name="Perez-Perez A."/>
            <person name="Purnelle B."/>
            <person name="Bent E."/>
            <person name="Johnson S."/>
            <person name="Tacon D."/>
            <person name="Jesse T."/>
            <person name="Heijnen L."/>
            <person name="Schwarz S."/>
            <person name="Scholler P."/>
            <person name="Heber S."/>
            <person name="Francs P."/>
            <person name="Bielke C."/>
            <person name="Frishman D."/>
            <person name="Haase D."/>
            <person name="Lemcke K."/>
            <person name="Mewes H.-W."/>
            <person name="Stocker S."/>
            <person name="Zaccaria P."/>
            <person name="Bevan M."/>
            <person name="Wilson R.K."/>
            <person name="de la Bastide M."/>
            <person name="Habermann K."/>
            <person name="Parnell L."/>
            <person name="Dedhia N."/>
            <person name="Gnoj L."/>
            <person name="Schutz K."/>
            <person name="Huang E."/>
            <person name="Spiegel L."/>
            <person name="Sekhon M."/>
            <person name="Murray J."/>
            <person name="Sheet P."/>
            <person name="Cordes M."/>
            <person name="Abu-Threideh J."/>
            <person name="Stoneking T."/>
            <person name="Kalicki J."/>
            <person name="Graves T."/>
            <person name="Harmon G."/>
            <person name="Edwards J."/>
            <person name="Latreille P."/>
            <person name="Courtney L."/>
            <person name="Cloud J."/>
            <person name="Abbott A."/>
            <person name="Scott K."/>
            <person name="Johnson D."/>
            <person name="Minx P."/>
            <person name="Bentley D."/>
            <person name="Fulton B."/>
            <person name="Miller N."/>
            <person name="Greco T."/>
            <person name="Kemp K."/>
            <person name="Kramer J."/>
            <person name="Fulton L."/>
            <person name="Mardis E."/>
            <person name="Dante M."/>
            <person name="Pepin K."/>
            <person name="Hillier L.W."/>
            <person name="Nelson J."/>
            <person name="Spieth J."/>
            <person name="Ryan E."/>
            <person name="Andrews S."/>
            <person name="Geisel C."/>
            <person name="Layman D."/>
            <person name="Du H."/>
            <person name="Ali J."/>
            <person name="Berghoff A."/>
            <person name="Jones K."/>
            <person name="Drone K."/>
            <person name="Cotton M."/>
            <person name="Joshu C."/>
            <person name="Antonoiu B."/>
            <person name="Zidanic M."/>
            <person name="Strong C."/>
            <person name="Sun H."/>
            <person name="Lamar B."/>
            <person name="Yordan C."/>
            <person name="Ma P."/>
            <person name="Zhong J."/>
            <person name="Preston R."/>
            <person name="Vil D."/>
            <person name="Shekher M."/>
            <person name="Matero A."/>
            <person name="Shah R."/>
            <person name="Swaby I.K."/>
            <person name="O'Shaughnessy A."/>
            <person name="Rodriguez M."/>
            <person name="Hoffman J."/>
            <person name="Till S."/>
            <person name="Granat S."/>
            <person name="Shohdy N."/>
            <person name="Hasegawa A."/>
            <person name="Hameed A."/>
            <person name="Lodhi M."/>
            <person name="Johnson A."/>
            <person name="Chen E."/>
            <person name="Marra M.A."/>
            <person name="Martienssen R."/>
            <person name="McCombie W.R."/>
        </authorList>
    </citation>
    <scope>NUCLEOTIDE SEQUENCE [LARGE SCALE GENOMIC DNA]</scope>
    <source>
        <strain>cv. Columbia</strain>
    </source>
</reference>
<reference key="2">
    <citation type="journal article" date="2017" name="Plant J.">
        <title>Araport11: a complete reannotation of the Arabidopsis thaliana reference genome.</title>
        <authorList>
            <person name="Cheng C.Y."/>
            <person name="Krishnakumar V."/>
            <person name="Chan A.P."/>
            <person name="Thibaud-Nissen F."/>
            <person name="Schobel S."/>
            <person name="Town C.D."/>
        </authorList>
    </citation>
    <scope>GENOME REANNOTATION</scope>
    <source>
        <strain>cv. Columbia</strain>
    </source>
</reference>
<reference key="3">
    <citation type="submission" date="2003-10" db="EMBL/GenBank/DDBJ databases">
        <title>Arabidopsis ORF clones.</title>
        <authorList>
            <person name="Cheuk R.F."/>
            <person name="Chen H."/>
            <person name="Kim C.J."/>
            <person name="Shinn P."/>
            <person name="Carninci P."/>
            <person name="Hayashizaki Y."/>
            <person name="Ishida J."/>
            <person name="Kamiya A."/>
            <person name="Kawai J."/>
            <person name="Narusaka M."/>
            <person name="Sakurai T."/>
            <person name="Satou M."/>
            <person name="Seki M."/>
            <person name="Shinozaki K."/>
            <person name="Ecker J.R."/>
        </authorList>
    </citation>
    <scope>NUCLEOTIDE SEQUENCE [LARGE SCALE MRNA]</scope>
    <source>
        <strain>cv. Columbia</strain>
    </source>
</reference>
<reference key="4">
    <citation type="submission" date="2004-09" db="EMBL/GenBank/DDBJ databases">
        <title>Large-scale analysis of RIKEN Arabidopsis full-length (RAFL) cDNAs.</title>
        <authorList>
            <person name="Totoki Y."/>
            <person name="Seki M."/>
            <person name="Ishida J."/>
            <person name="Nakajima M."/>
            <person name="Enju A."/>
            <person name="Kamiya A."/>
            <person name="Narusaka M."/>
            <person name="Shin-i T."/>
            <person name="Nakagawa M."/>
            <person name="Sakamoto N."/>
            <person name="Oishi K."/>
            <person name="Kohara Y."/>
            <person name="Kobayashi M."/>
            <person name="Toyoda A."/>
            <person name="Sakaki Y."/>
            <person name="Sakurai T."/>
            <person name="Iida K."/>
            <person name="Akiyama K."/>
            <person name="Satou M."/>
            <person name="Toyoda T."/>
            <person name="Konagaya A."/>
            <person name="Carninci P."/>
            <person name="Kawai J."/>
            <person name="Hayashizaki Y."/>
            <person name="Shinozaki K."/>
        </authorList>
    </citation>
    <scope>NUCLEOTIDE SEQUENCE [LARGE SCALE MRNA]</scope>
    <source>
        <strain>cv. Columbia</strain>
    </source>
</reference>
<reference key="5">
    <citation type="journal article" date="2008" name="Plant Cell">
        <title>Characterization of Arabidopsis and rice DWD proteins and their roles as substrate receptors for CUL4-RING E3 ubiquitin ligases.</title>
        <authorList>
            <person name="Lee J.H."/>
            <person name="Terzaghi W."/>
            <person name="Gusmaroli G."/>
            <person name="Charron J.B."/>
            <person name="Yoon H.J."/>
            <person name="Chen H."/>
            <person name="He Y.J."/>
            <person name="Xiong Y."/>
            <person name="Deng X.W."/>
        </authorList>
    </citation>
    <scope>DWD MOTIF</scope>
</reference>
<reference key="6">
    <citation type="journal article" date="2013" name="Curr. Biol.">
        <title>A matrix protein silences transposons and repeats through interaction with retinoblastoma-associated proteins.</title>
        <authorList>
            <person name="Xu Y."/>
            <person name="Wang Y."/>
            <person name="Stroud H."/>
            <person name="Gu X."/>
            <person name="Sun B."/>
            <person name="Gan E.S."/>
            <person name="Ng K.H."/>
            <person name="Jacobsen S.E."/>
            <person name="He Y."/>
            <person name="Ito T."/>
        </authorList>
    </citation>
    <scope>INTERACTION WITH AHL16</scope>
</reference>
<reference key="7">
    <citation type="journal article" date="2018" name="J. Integr. Plant Biol.">
        <title>Arabidopsis PWWP domain proteins mediate H3K27 trimethylation on FLC and regulate flowering time.</title>
        <authorList>
            <person name="Zhou J.X."/>
            <person name="Liu Z.W."/>
            <person name="Li Y.Q."/>
            <person name="Li L."/>
            <person name="Wang B."/>
            <person name="Chen S."/>
            <person name="He X.J."/>
        </authorList>
    </citation>
    <scope>FUNCTION</scope>
    <scope>DISRUPTION PHENOTYPE</scope>
    <scope>INTERACTION WITH LHP1; PDP2; PDP3 AND PDP6</scope>
    <scope>SUBUNIT</scope>
</reference>
<feature type="chain" id="PRO_0000051084" description="WD-40 repeat-containing protein MSI5">
    <location>
        <begin position="1"/>
        <end position="487"/>
    </location>
</feature>
<feature type="repeat" description="WD 1" evidence="2">
    <location>
        <begin position="142"/>
        <end position="182"/>
    </location>
</feature>
<feature type="repeat" description="WD 2" evidence="2">
    <location>
        <begin position="197"/>
        <end position="237"/>
    </location>
</feature>
<feature type="repeat" description="WD 3" evidence="2">
    <location>
        <begin position="270"/>
        <end position="310"/>
    </location>
</feature>
<feature type="repeat" description="WD 4" evidence="2">
    <location>
        <begin position="315"/>
        <end position="355"/>
    </location>
</feature>
<feature type="repeat" description="WD 5" evidence="2">
    <location>
        <begin position="364"/>
        <end position="404"/>
    </location>
</feature>
<feature type="repeat" description="WD 6" evidence="2">
    <location>
        <begin position="419"/>
        <end position="466"/>
    </location>
</feature>
<feature type="region of interest" description="Disordered" evidence="4">
    <location>
        <begin position="1"/>
        <end position="44"/>
    </location>
</feature>
<feature type="region of interest" description="Disordered" evidence="4">
    <location>
        <begin position="236"/>
        <end position="268"/>
    </location>
</feature>
<feature type="short sequence motif" description="Nuclear localization signal" evidence="3">
    <location>
        <begin position="14"/>
        <end position="21"/>
    </location>
</feature>
<feature type="short sequence motif" description="DWD box" evidence="2">
    <location>
        <begin position="288"/>
        <end position="303"/>
    </location>
</feature>
<feature type="compositionally biased region" description="Low complexity" evidence="4">
    <location>
        <begin position="1"/>
        <end position="12"/>
    </location>
</feature>
<feature type="compositionally biased region" description="Polar residues" evidence="4">
    <location>
        <begin position="237"/>
        <end position="252"/>
    </location>
</feature>
<feature type="modified residue" description="N-acetylmethionine" evidence="1">
    <location>
        <position position="1"/>
    </location>
</feature>
<evidence type="ECO:0000250" key="1">
    <source>
        <dbReference type="UniProtKB" id="O22607"/>
    </source>
</evidence>
<evidence type="ECO:0000255" key="2"/>
<evidence type="ECO:0000255" key="3">
    <source>
        <dbReference type="PROSITE-ProRule" id="PRU00768"/>
    </source>
</evidence>
<evidence type="ECO:0000256" key="4">
    <source>
        <dbReference type="SAM" id="MobiDB-lite"/>
    </source>
</evidence>
<evidence type="ECO:0000269" key="5">
    <source>
    </source>
</evidence>
<evidence type="ECO:0000269" key="6">
    <source>
    </source>
</evidence>
<evidence type="ECO:0000303" key="7">
    <source>
    </source>
</evidence>
<evidence type="ECO:0000305" key="8"/>
<evidence type="ECO:0000312" key="9">
    <source>
        <dbReference type="Araport" id="AT4G29730"/>
    </source>
</evidence>
<evidence type="ECO:0000312" key="10">
    <source>
        <dbReference type="EMBL" id="CAB45333.1"/>
    </source>
</evidence>
<accession>Q9SU78</accession>
<accession>Q6NQ53</accession>
<sequence>MESEAAATVQATRPRRAPRTPVTAILTDKRRRKPKSNNESQLPFLLQQSQKATVDDTYSQWKTLLPILYDSFVNHTLVWPSLSCRWGPQLEQAGSKTQRLYLSEQTNGSVPNTLVIANCETVNRQLNEKAHSPFVKKYKTIIHPGEVNRIRELPQNSKIVATHTDSPDILIWNTETQPDRYAVLGAPDSRPDLLLIGHQDDAEFALAMCPTEPFVLSGGKDKSVILWNIQDHITMAGSDSKSPGSSFKQTGEGSDKTGGPSVGPRGIYNGHKDTVEDVAFCPSSAQEFCSVGDDSCLMLWDARTGTSPAMKVEKAHDADLHCVDWNPHDNNLILTGSADNTVRVFDRRNLTSNGVGSPVYKFEGHRAAVLCVQWSPDKSSVFGSSAEDGLLNIWDCDRVGKKSERATKTPDGLFFQHAGHRDKVVDFHWSLLNPWTIVSVSDNCESIGGGGTLQIWRMSDLIYRPEDEVLTELEKFKSHVFTCTSKS</sequence>
<organism>
    <name type="scientific">Arabidopsis thaliana</name>
    <name type="common">Mouse-ear cress</name>
    <dbReference type="NCBI Taxonomy" id="3702"/>
    <lineage>
        <taxon>Eukaryota</taxon>
        <taxon>Viridiplantae</taxon>
        <taxon>Streptophyta</taxon>
        <taxon>Embryophyta</taxon>
        <taxon>Tracheophyta</taxon>
        <taxon>Spermatophyta</taxon>
        <taxon>Magnoliopsida</taxon>
        <taxon>eudicotyledons</taxon>
        <taxon>Gunneridae</taxon>
        <taxon>Pentapetalae</taxon>
        <taxon>rosids</taxon>
        <taxon>malvids</taxon>
        <taxon>Brassicales</taxon>
        <taxon>Brassicaceae</taxon>
        <taxon>Camelineae</taxon>
        <taxon>Arabidopsis</taxon>
    </lineage>
</organism>
<gene>
    <name evidence="7" type="primary">MSI5</name>
    <name evidence="9" type="ordered locus">At4g29730</name>
    <name evidence="10" type="ORF">T16L4.240</name>
</gene>
<comment type="function">
    <text evidence="1 6">Core histone-binding subunit that may target chromatin assembly factors, chromatin remodeling factors and histone deacetylases to their histone substrates in a manner that is regulated by nucleosomal DNA (By similarity). Acts together with PDP1 and MSI4/FVE to regulate the function of the PRC2 complex on FLC (PubMed:29314758).</text>
</comment>
<comment type="subunit">
    <text evidence="5 6">Interacts with AHL16 (PubMed:23394836). Interacts with LHP1, PDP2, PDP3 and PDP6 (PubMed:29314758). Component of the PRC2 (polycomb repressive complex 2) complex which regulates histone methylation on histone H3K27 (PubMed:29314758).</text>
</comment>
<comment type="subcellular location">
    <subcellularLocation>
        <location evidence="1 3">Nucleus</location>
    </subcellularLocation>
</comment>
<comment type="domain">
    <text evidence="1">The DWD box is required for interaction with DDB1A.</text>
</comment>
<comment type="disruption phenotype">
    <text evidence="6">Reduced H3K27me3 level but increased levels of histone H3 acetylation and H3K4me3 on FLC in the fve msi5 double mutant.</text>
</comment>
<comment type="similarity">
    <text evidence="8">Belongs to the WD repeat RBAP46/RBAP48/MSI1 family.</text>
</comment>
<comment type="sequence caution" evidence="8">
    <conflict type="erroneous gene model prediction">
        <sequence resource="EMBL-CDS" id="CAB45333"/>
    </conflict>
</comment>
<comment type="sequence caution" evidence="8">
    <conflict type="erroneous gene model prediction">
        <sequence resource="EMBL-CDS" id="CAB79731"/>
    </conflict>
</comment>
<keyword id="KW-0007">Acetylation</keyword>
<keyword id="KW-0156">Chromatin regulator</keyword>
<keyword id="KW-0539">Nucleus</keyword>
<keyword id="KW-1185">Reference proteome</keyword>
<keyword id="KW-0677">Repeat</keyword>
<keyword id="KW-0678">Repressor</keyword>
<keyword id="KW-0804">Transcription</keyword>
<keyword id="KW-0805">Transcription regulation</keyword>
<keyword id="KW-0853">WD repeat</keyword>
<name>MSI5_ARATH</name>
<proteinExistence type="evidence at protein level"/>